<dbReference type="EC" id="2.5.1.31" evidence="1"/>
<dbReference type="EMBL" id="AE009442">
    <property type="protein sequence ID" value="AAO28214.1"/>
    <property type="molecule type" value="Genomic_DNA"/>
</dbReference>
<dbReference type="RefSeq" id="WP_011097592.1">
    <property type="nucleotide sequence ID" value="NC_004556.1"/>
</dbReference>
<dbReference type="SMR" id="Q87EH7"/>
<dbReference type="GeneID" id="93904031"/>
<dbReference type="KEGG" id="xft:PD_0330"/>
<dbReference type="HOGENOM" id="CLU_038505_1_1_6"/>
<dbReference type="Proteomes" id="UP000002516">
    <property type="component" value="Chromosome"/>
</dbReference>
<dbReference type="GO" id="GO:0005829">
    <property type="term" value="C:cytosol"/>
    <property type="evidence" value="ECO:0007669"/>
    <property type="project" value="TreeGrafter"/>
</dbReference>
<dbReference type="GO" id="GO:0008834">
    <property type="term" value="F:ditrans,polycis-undecaprenyl-diphosphate synthase [(2E,6E)-farnesyl-diphosphate specific] activity"/>
    <property type="evidence" value="ECO:0007669"/>
    <property type="project" value="UniProtKB-UniRule"/>
</dbReference>
<dbReference type="GO" id="GO:0000287">
    <property type="term" value="F:magnesium ion binding"/>
    <property type="evidence" value="ECO:0007669"/>
    <property type="project" value="UniProtKB-UniRule"/>
</dbReference>
<dbReference type="GO" id="GO:0071555">
    <property type="term" value="P:cell wall organization"/>
    <property type="evidence" value="ECO:0007669"/>
    <property type="project" value="UniProtKB-KW"/>
</dbReference>
<dbReference type="GO" id="GO:0009252">
    <property type="term" value="P:peptidoglycan biosynthetic process"/>
    <property type="evidence" value="ECO:0007669"/>
    <property type="project" value="UniProtKB-UniRule"/>
</dbReference>
<dbReference type="GO" id="GO:0016094">
    <property type="term" value="P:polyprenol biosynthetic process"/>
    <property type="evidence" value="ECO:0007669"/>
    <property type="project" value="TreeGrafter"/>
</dbReference>
<dbReference type="GO" id="GO:0008360">
    <property type="term" value="P:regulation of cell shape"/>
    <property type="evidence" value="ECO:0007669"/>
    <property type="project" value="UniProtKB-KW"/>
</dbReference>
<dbReference type="CDD" id="cd00475">
    <property type="entry name" value="Cis_IPPS"/>
    <property type="match status" value="1"/>
</dbReference>
<dbReference type="FunFam" id="3.40.1180.10:FF:000001">
    <property type="entry name" value="(2E,6E)-farnesyl-diphosphate-specific ditrans,polycis-undecaprenyl-diphosphate synthase"/>
    <property type="match status" value="1"/>
</dbReference>
<dbReference type="Gene3D" id="3.40.1180.10">
    <property type="entry name" value="Decaprenyl diphosphate synthase-like"/>
    <property type="match status" value="1"/>
</dbReference>
<dbReference type="HAMAP" id="MF_01139">
    <property type="entry name" value="ISPT"/>
    <property type="match status" value="1"/>
</dbReference>
<dbReference type="InterPro" id="IPR001441">
    <property type="entry name" value="UPP_synth-like"/>
</dbReference>
<dbReference type="InterPro" id="IPR018520">
    <property type="entry name" value="UPP_synth-like_CS"/>
</dbReference>
<dbReference type="InterPro" id="IPR036424">
    <property type="entry name" value="UPP_synth-like_sf"/>
</dbReference>
<dbReference type="NCBIfam" id="TIGR00055">
    <property type="entry name" value="uppS"/>
    <property type="match status" value="1"/>
</dbReference>
<dbReference type="PANTHER" id="PTHR10291:SF0">
    <property type="entry name" value="DEHYDRODOLICHYL DIPHOSPHATE SYNTHASE 2"/>
    <property type="match status" value="1"/>
</dbReference>
<dbReference type="PANTHER" id="PTHR10291">
    <property type="entry name" value="DEHYDRODOLICHYL DIPHOSPHATE SYNTHASE FAMILY MEMBER"/>
    <property type="match status" value="1"/>
</dbReference>
<dbReference type="Pfam" id="PF01255">
    <property type="entry name" value="Prenyltransf"/>
    <property type="match status" value="1"/>
</dbReference>
<dbReference type="SUPFAM" id="SSF64005">
    <property type="entry name" value="Undecaprenyl diphosphate synthase"/>
    <property type="match status" value="1"/>
</dbReference>
<dbReference type="PROSITE" id="PS01066">
    <property type="entry name" value="UPP_SYNTHASE"/>
    <property type="match status" value="1"/>
</dbReference>
<keyword id="KW-0133">Cell shape</keyword>
<keyword id="KW-0961">Cell wall biogenesis/degradation</keyword>
<keyword id="KW-0460">Magnesium</keyword>
<keyword id="KW-0479">Metal-binding</keyword>
<keyword id="KW-0573">Peptidoglycan synthesis</keyword>
<keyword id="KW-1185">Reference proteome</keyword>
<keyword id="KW-0808">Transferase</keyword>
<protein>
    <recommendedName>
        <fullName evidence="1">Ditrans,polycis-undecaprenyl-diphosphate synthase ((2E,6E)-farnesyl-diphosphate specific)</fullName>
        <ecNumber evidence="1">2.5.1.31</ecNumber>
    </recommendedName>
    <alternativeName>
        <fullName evidence="1">Ditrans,polycis-undecaprenylcistransferase</fullName>
    </alternativeName>
    <alternativeName>
        <fullName evidence="1">Undecaprenyl diphosphate synthase</fullName>
        <shortName evidence="1">UDS</shortName>
    </alternativeName>
    <alternativeName>
        <fullName evidence="1">Undecaprenyl pyrophosphate synthase</fullName>
        <shortName evidence="1">UPP synthase</shortName>
    </alternativeName>
</protein>
<gene>
    <name evidence="1" type="primary">uppS</name>
    <name type="ordered locus">PD_0330</name>
</gene>
<evidence type="ECO:0000255" key="1">
    <source>
        <dbReference type="HAMAP-Rule" id="MF_01139"/>
    </source>
</evidence>
<name>UPPS_XYLFT</name>
<reference key="1">
    <citation type="journal article" date="2003" name="J. Bacteriol.">
        <title>Comparative analyses of the complete genome sequences of Pierce's disease and citrus variegated chlorosis strains of Xylella fastidiosa.</title>
        <authorList>
            <person name="Van Sluys M.A."/>
            <person name="de Oliveira M.C."/>
            <person name="Monteiro-Vitorello C.B."/>
            <person name="Miyaki C.Y."/>
            <person name="Furlan L.R."/>
            <person name="Camargo L.E.A."/>
            <person name="da Silva A.C.R."/>
            <person name="Moon D.H."/>
            <person name="Takita M.A."/>
            <person name="Lemos E.G.M."/>
            <person name="Machado M.A."/>
            <person name="Ferro M.I.T."/>
            <person name="da Silva F.R."/>
            <person name="Goldman M.H.S."/>
            <person name="Goldman G.H."/>
            <person name="Lemos M.V.F."/>
            <person name="El-Dorry H."/>
            <person name="Tsai S.M."/>
            <person name="Carrer H."/>
            <person name="Carraro D.M."/>
            <person name="de Oliveira R.C."/>
            <person name="Nunes L.R."/>
            <person name="Siqueira W.J."/>
            <person name="Coutinho L.L."/>
            <person name="Kimura E.T."/>
            <person name="Ferro E.S."/>
            <person name="Harakava R."/>
            <person name="Kuramae E.E."/>
            <person name="Marino C.L."/>
            <person name="Giglioti E."/>
            <person name="Abreu I.L."/>
            <person name="Alves L.M.C."/>
            <person name="do Amaral A.M."/>
            <person name="Baia G.S."/>
            <person name="Blanco S.R."/>
            <person name="Brito M.S."/>
            <person name="Cannavan F.S."/>
            <person name="Celestino A.V."/>
            <person name="da Cunha A.F."/>
            <person name="Fenille R.C."/>
            <person name="Ferro J.A."/>
            <person name="Formighieri E.F."/>
            <person name="Kishi L.T."/>
            <person name="Leoni S.G."/>
            <person name="Oliveira A.R."/>
            <person name="Rosa V.E. Jr."/>
            <person name="Sassaki F.T."/>
            <person name="Sena J.A.D."/>
            <person name="de Souza A.A."/>
            <person name="Truffi D."/>
            <person name="Tsukumo F."/>
            <person name="Yanai G.M."/>
            <person name="Zaros L.G."/>
            <person name="Civerolo E.L."/>
            <person name="Simpson A.J.G."/>
            <person name="Almeida N.F. Jr."/>
            <person name="Setubal J.C."/>
            <person name="Kitajima J.P."/>
        </authorList>
    </citation>
    <scope>NUCLEOTIDE SEQUENCE [LARGE SCALE GENOMIC DNA]</scope>
    <source>
        <strain>Temecula1 / ATCC 700964</strain>
    </source>
</reference>
<sequence>MQINTIPVNPTLPRHIAIIMDGNGRWAERRSRPRTTGHRAGVKAAMRTVDFCLEKGIKMLTLFAFSSENWNRPADEVNFLMEMSIKLFGRGIEELHRRGVQVRFIGERKRFDIALVEHMTKAEHLTASNQRLILSLAVSYGGRQDITMAARALAQDVAAGRLKPEQIDEDLLGQHMALADLPPPDMFIRTSGVIRISNFLLWQIAYTELWFTDVMWPEFNSTVLQQALDDYASRERRFGLTNAQIASRGKGSIPA</sequence>
<accession>Q87EH7</accession>
<feature type="chain" id="PRO_0000123722" description="Ditrans,polycis-undecaprenyl-diphosphate synthase ((2E,6E)-farnesyl-diphosphate specific)">
    <location>
        <begin position="1"/>
        <end position="255"/>
    </location>
</feature>
<feature type="active site" evidence="1">
    <location>
        <position position="21"/>
    </location>
</feature>
<feature type="active site" description="Proton acceptor" evidence="1">
    <location>
        <position position="69"/>
    </location>
</feature>
<feature type="binding site" evidence="1">
    <location>
        <position position="21"/>
    </location>
    <ligand>
        <name>Mg(2+)</name>
        <dbReference type="ChEBI" id="CHEBI:18420"/>
    </ligand>
</feature>
<feature type="binding site" evidence="1">
    <location>
        <begin position="22"/>
        <end position="25"/>
    </location>
    <ligand>
        <name>substrate</name>
    </ligand>
</feature>
<feature type="binding site" evidence="1">
    <location>
        <position position="26"/>
    </location>
    <ligand>
        <name>substrate</name>
    </ligand>
</feature>
<feature type="binding site" evidence="1">
    <location>
        <position position="34"/>
    </location>
    <ligand>
        <name>substrate</name>
    </ligand>
</feature>
<feature type="binding site" evidence="1">
    <location>
        <position position="38"/>
    </location>
    <ligand>
        <name>substrate</name>
    </ligand>
</feature>
<feature type="binding site" evidence="1">
    <location>
        <begin position="66"/>
        <end position="68"/>
    </location>
    <ligand>
        <name>substrate</name>
    </ligand>
</feature>
<feature type="binding site" evidence="1">
    <location>
        <position position="70"/>
    </location>
    <ligand>
        <name>substrate</name>
    </ligand>
</feature>
<feature type="binding site" evidence="1">
    <location>
        <position position="72"/>
    </location>
    <ligand>
        <name>substrate</name>
    </ligand>
</feature>
<feature type="binding site" evidence="1">
    <location>
        <position position="189"/>
    </location>
    <ligand>
        <name>substrate</name>
    </ligand>
</feature>
<feature type="binding site" evidence="1">
    <location>
        <begin position="195"/>
        <end position="197"/>
    </location>
    <ligand>
        <name>substrate</name>
    </ligand>
</feature>
<feature type="binding site" evidence="1">
    <location>
        <position position="208"/>
    </location>
    <ligand>
        <name>Mg(2+)</name>
        <dbReference type="ChEBI" id="CHEBI:18420"/>
    </ligand>
</feature>
<organism>
    <name type="scientific">Xylella fastidiosa (strain Temecula1 / ATCC 700964)</name>
    <dbReference type="NCBI Taxonomy" id="183190"/>
    <lineage>
        <taxon>Bacteria</taxon>
        <taxon>Pseudomonadati</taxon>
        <taxon>Pseudomonadota</taxon>
        <taxon>Gammaproteobacteria</taxon>
        <taxon>Lysobacterales</taxon>
        <taxon>Lysobacteraceae</taxon>
        <taxon>Xylella</taxon>
    </lineage>
</organism>
<comment type="function">
    <text evidence="1">Catalyzes the sequential condensation of isopentenyl diphosphate (IPP) with (2E,6E)-farnesyl diphosphate (E,E-FPP) to yield (2Z,6Z,10Z,14Z,18Z,22Z,26Z,30Z,34E,38E)-undecaprenyl diphosphate (di-trans,octa-cis-UPP). UPP is the precursor of glycosyl carrier lipid in the biosynthesis of bacterial cell wall polysaccharide components such as peptidoglycan and lipopolysaccharide.</text>
</comment>
<comment type="catalytic activity">
    <reaction evidence="1">
        <text>8 isopentenyl diphosphate + (2E,6E)-farnesyl diphosphate = di-trans,octa-cis-undecaprenyl diphosphate + 8 diphosphate</text>
        <dbReference type="Rhea" id="RHEA:27551"/>
        <dbReference type="ChEBI" id="CHEBI:33019"/>
        <dbReference type="ChEBI" id="CHEBI:58405"/>
        <dbReference type="ChEBI" id="CHEBI:128769"/>
        <dbReference type="ChEBI" id="CHEBI:175763"/>
        <dbReference type="EC" id="2.5.1.31"/>
    </reaction>
</comment>
<comment type="cofactor">
    <cofactor evidence="1">
        <name>Mg(2+)</name>
        <dbReference type="ChEBI" id="CHEBI:18420"/>
    </cofactor>
    <text evidence="1">Binds 2 magnesium ions per subunit.</text>
</comment>
<comment type="subunit">
    <text evidence="1">Homodimer.</text>
</comment>
<comment type="similarity">
    <text evidence="1">Belongs to the UPP synthase family.</text>
</comment>
<proteinExistence type="inferred from homology"/>